<proteinExistence type="inferred from homology"/>
<sequence>MAKVVGIDLGTTNSCVAVMEGGKPTVIANAEGFRTTPSVVAYTKNGDRLVGQIAKRQAVMNPENTFYSVKRFIGRRFDEVTHEATEVSYKVLNVNGNVKLDCPALGKQFAPEEISAQVLRKLKEDASKYLGEEVTQAVITVPAYFNDSQRQATKDAGKIAGLEVLRIINEPTAASLAYGLDKKANETILVFDLGGGTFDVSILEVGDGVFEVLATSGDTHLGGDDFDKKIVDYLAESFRAQEGIDLRKDRQALQRLTEAAEKAKIELSSVMQTEINLPFITATQDGPKHLDMTLTRAKFEELCSDLIDRCRVPVEQALKDAKLSKDQIDEVVLVGGSTRIPAIQELVKRLLGKDPNQSVNPDEVVAVGAAIQAGVLAGEVKDILLLDVTPLSLGVETLGGVMTKIIPRNTTIPTKKSEVFSTAVDGQTNVEIHVLQGEREMAADNKSLGTFRLDGIPPAPRGVPQIEVTFDIDANGILNVTARDKGTGKQQSISITGASTLPKEEVERMVREAEMNAAADKAKREKIETKNQAEQLCYQAEKQLNELGDKVSTSDKDRLTSLIANLRSEIGTEAEKKPIDAIDFGRVKSLMQDLQQALYSVGSSVYQSAQSSDGTGSSSSGGSGSGGDDEVIDAEFSETK</sequence>
<accession>Q8DI58</accession>
<evidence type="ECO:0000250" key="1"/>
<evidence type="ECO:0000256" key="2">
    <source>
        <dbReference type="SAM" id="MobiDB-lite"/>
    </source>
</evidence>
<evidence type="ECO:0000305" key="3"/>
<keyword id="KW-0067">ATP-binding</keyword>
<keyword id="KW-0143">Chaperone</keyword>
<keyword id="KW-0547">Nucleotide-binding</keyword>
<keyword id="KW-0597">Phosphoprotein</keyword>
<keyword id="KW-1185">Reference proteome</keyword>
<keyword id="KW-0346">Stress response</keyword>
<organism>
    <name type="scientific">Thermosynechococcus vestitus (strain NIES-2133 / IAM M-273 / BP-1)</name>
    <dbReference type="NCBI Taxonomy" id="197221"/>
    <lineage>
        <taxon>Bacteria</taxon>
        <taxon>Bacillati</taxon>
        <taxon>Cyanobacteriota</taxon>
        <taxon>Cyanophyceae</taxon>
        <taxon>Acaryochloridales</taxon>
        <taxon>Thermosynechococcaceae</taxon>
        <taxon>Thermosynechococcus</taxon>
    </lineage>
</organism>
<feature type="chain" id="PRO_0000078561" description="Chaperone protein dnaK2">
    <location>
        <begin position="1"/>
        <end position="640"/>
    </location>
</feature>
<feature type="region of interest" description="Disordered" evidence="2">
    <location>
        <begin position="605"/>
        <end position="640"/>
    </location>
</feature>
<feature type="compositionally biased region" description="Acidic residues" evidence="2">
    <location>
        <begin position="627"/>
        <end position="640"/>
    </location>
</feature>
<feature type="modified residue" description="Phosphothreonine; by autocatalysis" evidence="1">
    <location>
        <position position="197"/>
    </location>
</feature>
<gene>
    <name type="primary">dnaK2</name>
    <name type="ordered locus">tlr1733</name>
</gene>
<protein>
    <recommendedName>
        <fullName>Chaperone protein dnaK2</fullName>
    </recommendedName>
    <alternativeName>
        <fullName>HSP70-2</fullName>
    </alternativeName>
    <alternativeName>
        <fullName>Heat shock 70 kDa protein 2</fullName>
    </alternativeName>
    <alternativeName>
        <fullName>Heat shock protein 70-2</fullName>
    </alternativeName>
</protein>
<dbReference type="EMBL" id="BA000039">
    <property type="protein sequence ID" value="BAC09285.1"/>
    <property type="molecule type" value="Genomic_DNA"/>
</dbReference>
<dbReference type="RefSeq" id="NP_682523.1">
    <property type="nucleotide sequence ID" value="NC_004113.1"/>
</dbReference>
<dbReference type="RefSeq" id="WP_011057570.1">
    <property type="nucleotide sequence ID" value="NC_004113.1"/>
</dbReference>
<dbReference type="SMR" id="Q8DI58"/>
<dbReference type="STRING" id="197221.gene:10748337"/>
<dbReference type="EnsemblBacteria" id="BAC09285">
    <property type="protein sequence ID" value="BAC09285"/>
    <property type="gene ID" value="BAC09285"/>
</dbReference>
<dbReference type="KEGG" id="tel:tlr1733"/>
<dbReference type="PATRIC" id="fig|197221.4.peg.1814"/>
<dbReference type="eggNOG" id="COG0443">
    <property type="taxonomic scope" value="Bacteria"/>
</dbReference>
<dbReference type="Proteomes" id="UP000000440">
    <property type="component" value="Chromosome"/>
</dbReference>
<dbReference type="GO" id="GO:0005524">
    <property type="term" value="F:ATP binding"/>
    <property type="evidence" value="ECO:0007669"/>
    <property type="project" value="UniProtKB-UniRule"/>
</dbReference>
<dbReference type="GO" id="GO:0140662">
    <property type="term" value="F:ATP-dependent protein folding chaperone"/>
    <property type="evidence" value="ECO:0007669"/>
    <property type="project" value="InterPro"/>
</dbReference>
<dbReference type="GO" id="GO:0051082">
    <property type="term" value="F:unfolded protein binding"/>
    <property type="evidence" value="ECO:0007669"/>
    <property type="project" value="InterPro"/>
</dbReference>
<dbReference type="CDD" id="cd10234">
    <property type="entry name" value="ASKHA_NBD_HSP70_DnaK-like"/>
    <property type="match status" value="1"/>
</dbReference>
<dbReference type="FunFam" id="2.60.34.10:FF:000014">
    <property type="entry name" value="Chaperone protein DnaK HSP70"/>
    <property type="match status" value="1"/>
</dbReference>
<dbReference type="FunFam" id="1.20.1270.10:FF:000001">
    <property type="entry name" value="Molecular chaperone DnaK"/>
    <property type="match status" value="1"/>
</dbReference>
<dbReference type="FunFam" id="3.30.420.40:FF:000004">
    <property type="entry name" value="Molecular chaperone DnaK"/>
    <property type="match status" value="1"/>
</dbReference>
<dbReference type="FunFam" id="3.90.640.10:FF:000003">
    <property type="entry name" value="Molecular chaperone DnaK"/>
    <property type="match status" value="1"/>
</dbReference>
<dbReference type="Gene3D" id="1.20.1270.10">
    <property type="match status" value="1"/>
</dbReference>
<dbReference type="Gene3D" id="3.30.420.40">
    <property type="match status" value="2"/>
</dbReference>
<dbReference type="Gene3D" id="3.90.640.10">
    <property type="entry name" value="Actin, Chain A, domain 4"/>
    <property type="match status" value="1"/>
</dbReference>
<dbReference type="Gene3D" id="2.60.34.10">
    <property type="entry name" value="Substrate Binding Domain Of DNAk, Chain A, domain 1"/>
    <property type="match status" value="1"/>
</dbReference>
<dbReference type="HAMAP" id="MF_00332">
    <property type="entry name" value="DnaK"/>
    <property type="match status" value="1"/>
</dbReference>
<dbReference type="InterPro" id="IPR043129">
    <property type="entry name" value="ATPase_NBD"/>
</dbReference>
<dbReference type="InterPro" id="IPR012725">
    <property type="entry name" value="Chaperone_DnaK"/>
</dbReference>
<dbReference type="InterPro" id="IPR018181">
    <property type="entry name" value="Heat_shock_70_CS"/>
</dbReference>
<dbReference type="InterPro" id="IPR029048">
    <property type="entry name" value="HSP70_C_sf"/>
</dbReference>
<dbReference type="InterPro" id="IPR029047">
    <property type="entry name" value="HSP70_peptide-bd_sf"/>
</dbReference>
<dbReference type="InterPro" id="IPR013126">
    <property type="entry name" value="Hsp_70_fam"/>
</dbReference>
<dbReference type="NCBIfam" id="NF001413">
    <property type="entry name" value="PRK00290.1"/>
    <property type="match status" value="1"/>
</dbReference>
<dbReference type="NCBIfam" id="NF003520">
    <property type="entry name" value="PRK05183.1"/>
    <property type="match status" value="1"/>
</dbReference>
<dbReference type="NCBIfam" id="TIGR02350">
    <property type="entry name" value="prok_dnaK"/>
    <property type="match status" value="1"/>
</dbReference>
<dbReference type="PANTHER" id="PTHR19375">
    <property type="entry name" value="HEAT SHOCK PROTEIN 70KDA"/>
    <property type="match status" value="1"/>
</dbReference>
<dbReference type="Pfam" id="PF00012">
    <property type="entry name" value="HSP70"/>
    <property type="match status" value="1"/>
</dbReference>
<dbReference type="PRINTS" id="PR00301">
    <property type="entry name" value="HEATSHOCK70"/>
</dbReference>
<dbReference type="SUPFAM" id="SSF53067">
    <property type="entry name" value="Actin-like ATPase domain"/>
    <property type="match status" value="2"/>
</dbReference>
<dbReference type="SUPFAM" id="SSF100920">
    <property type="entry name" value="Heat shock protein 70kD (HSP70), peptide-binding domain"/>
    <property type="match status" value="1"/>
</dbReference>
<dbReference type="PROSITE" id="PS00297">
    <property type="entry name" value="HSP70_1"/>
    <property type="match status" value="1"/>
</dbReference>
<dbReference type="PROSITE" id="PS00329">
    <property type="entry name" value="HSP70_2"/>
    <property type="match status" value="1"/>
</dbReference>
<dbReference type="PROSITE" id="PS01036">
    <property type="entry name" value="HSP70_3"/>
    <property type="match status" value="1"/>
</dbReference>
<comment type="function">
    <text evidence="1">Acts as a chaperone.</text>
</comment>
<comment type="induction">
    <text evidence="1">By stress conditions e.g. heat shock (By similarity).</text>
</comment>
<comment type="similarity">
    <text evidence="3">Belongs to the heat shock protein 70 family.</text>
</comment>
<reference key="1">
    <citation type="journal article" date="2002" name="DNA Res.">
        <title>Complete genome structure of the thermophilic cyanobacterium Thermosynechococcus elongatus BP-1.</title>
        <authorList>
            <person name="Nakamura Y."/>
            <person name="Kaneko T."/>
            <person name="Sato S."/>
            <person name="Ikeuchi M."/>
            <person name="Katoh H."/>
            <person name="Sasamoto S."/>
            <person name="Watanabe A."/>
            <person name="Iriguchi M."/>
            <person name="Kawashima K."/>
            <person name="Kimura T."/>
            <person name="Kishida Y."/>
            <person name="Kiyokawa C."/>
            <person name="Kohara M."/>
            <person name="Matsumoto M."/>
            <person name="Matsuno A."/>
            <person name="Nakazaki N."/>
            <person name="Shimpo S."/>
            <person name="Sugimoto M."/>
            <person name="Takeuchi C."/>
            <person name="Yamada M."/>
            <person name="Tabata S."/>
        </authorList>
    </citation>
    <scope>NUCLEOTIDE SEQUENCE [LARGE SCALE GENOMIC DNA]</scope>
    <source>
        <strain>NIES-2133 / IAM M-273 / BP-1</strain>
    </source>
</reference>
<name>DNAK2_THEVB</name>